<name>PNP_WIGBR</name>
<organism>
    <name type="scientific">Wigglesworthia glossinidia brevipalpis</name>
    <dbReference type="NCBI Taxonomy" id="36870"/>
    <lineage>
        <taxon>Bacteria</taxon>
        <taxon>Pseudomonadati</taxon>
        <taxon>Pseudomonadota</taxon>
        <taxon>Gammaproteobacteria</taxon>
        <taxon>Enterobacterales</taxon>
        <taxon>Erwiniaceae</taxon>
        <taxon>Wigglesworthia</taxon>
    </lineage>
</organism>
<sequence length="705" mass="79404">MLKATIQKFQYGKNIVTIETGMIARQATSAVMVRMDDTSVFVTVVADKKEKLGQKFFPLTVNYQERTYSIGRFPGGFFRREGRPNENEVLVSRLIDRSVRPLFPKNFFNDIQIIATVMSVNPQVNPDIVSIIGASAALSLSGLPFKCPIGSSRIGYIDNKYILNPTTSELIDSKLDMIVSGSSNAVLMVESSSNILQEKNILEAILFGNEQNKIVIENIDKLKKKFKKENLEYDLKSLNNNDIQFVIEDLFFDRIKDSYKIPEKKKRLEKIENIKNDILNNFINNNNTNEEEILYIIQNIERKIVRNRIISGKPRIDGRTEDMVRNLDIHLGILPRTHGSSLFTRGETQALVTTTLGTERDAQNIDDLVGDKIDRFLFHYNFPPYCVGEVGIISSPKRREIGHGKLAKRGMLAVMPDIDKFPYTIRIVSEITESNGSSSMASVCGASLSLMDAGVPISSSVAGIAMGLIKEKDKFVVLTDILGDEDYLGDMDFKVMGTREGVTALQMDIKIEGITSEILQVSLDKAKNARINILNEMDKVIKKPKNEISIFAPRIYKIKINPEKIKDVIGKGGSVIRMLTEKTKSSIEIEDDGTVKVISTDIKNAQCALKKIKDITHEIKINKIYVAKITRISEFGIFACLINNKEGLIHVSKIPYKKFSDINNNFKIGQIISVKVIEIDRYGRIRLSFTGTDKNKNKKFFNKNN</sequence>
<proteinExistence type="inferred from homology"/>
<gene>
    <name evidence="1" type="primary">pnp</name>
    <name type="ordered locus">WIGBR2220</name>
</gene>
<feature type="chain" id="PRO_0000329934" description="Polyribonucleotide nucleotidyltransferase">
    <location>
        <begin position="1"/>
        <end position="705"/>
    </location>
</feature>
<feature type="domain" description="KH" evidence="1">
    <location>
        <begin position="553"/>
        <end position="612"/>
    </location>
</feature>
<feature type="domain" description="S1 motif" evidence="1">
    <location>
        <begin position="622"/>
        <end position="690"/>
    </location>
</feature>
<feature type="binding site" evidence="1">
    <location>
        <position position="486"/>
    </location>
    <ligand>
        <name>Mg(2+)</name>
        <dbReference type="ChEBI" id="CHEBI:18420"/>
    </ligand>
</feature>
<feature type="binding site" evidence="1">
    <location>
        <position position="492"/>
    </location>
    <ligand>
        <name>Mg(2+)</name>
        <dbReference type="ChEBI" id="CHEBI:18420"/>
    </ligand>
</feature>
<dbReference type="EC" id="2.7.7.8" evidence="1"/>
<dbReference type="EMBL" id="BA000021">
    <property type="protein sequence ID" value="BAC24368.1"/>
    <property type="molecule type" value="Genomic_DNA"/>
</dbReference>
<dbReference type="SMR" id="Q8D2Y0"/>
<dbReference type="STRING" id="36870.gene:10368710"/>
<dbReference type="KEGG" id="wbr:pnp"/>
<dbReference type="eggNOG" id="COG1185">
    <property type="taxonomic scope" value="Bacteria"/>
</dbReference>
<dbReference type="HOGENOM" id="CLU_004217_2_2_6"/>
<dbReference type="OrthoDB" id="9804305at2"/>
<dbReference type="Proteomes" id="UP000000562">
    <property type="component" value="Chromosome"/>
</dbReference>
<dbReference type="GO" id="GO:0005829">
    <property type="term" value="C:cytosol"/>
    <property type="evidence" value="ECO:0007669"/>
    <property type="project" value="TreeGrafter"/>
</dbReference>
<dbReference type="GO" id="GO:0000175">
    <property type="term" value="F:3'-5'-RNA exonuclease activity"/>
    <property type="evidence" value="ECO:0007669"/>
    <property type="project" value="TreeGrafter"/>
</dbReference>
<dbReference type="GO" id="GO:0000287">
    <property type="term" value="F:magnesium ion binding"/>
    <property type="evidence" value="ECO:0007669"/>
    <property type="project" value="UniProtKB-UniRule"/>
</dbReference>
<dbReference type="GO" id="GO:0004654">
    <property type="term" value="F:polyribonucleotide nucleotidyltransferase activity"/>
    <property type="evidence" value="ECO:0007669"/>
    <property type="project" value="UniProtKB-UniRule"/>
</dbReference>
<dbReference type="GO" id="GO:0003723">
    <property type="term" value="F:RNA binding"/>
    <property type="evidence" value="ECO:0007669"/>
    <property type="project" value="UniProtKB-UniRule"/>
</dbReference>
<dbReference type="GO" id="GO:0006402">
    <property type="term" value="P:mRNA catabolic process"/>
    <property type="evidence" value="ECO:0007669"/>
    <property type="project" value="UniProtKB-UniRule"/>
</dbReference>
<dbReference type="GO" id="GO:0006396">
    <property type="term" value="P:RNA processing"/>
    <property type="evidence" value="ECO:0007669"/>
    <property type="project" value="InterPro"/>
</dbReference>
<dbReference type="CDD" id="cd02393">
    <property type="entry name" value="KH-I_PNPase"/>
    <property type="match status" value="1"/>
</dbReference>
<dbReference type="CDD" id="cd11364">
    <property type="entry name" value="RNase_PH_PNPase_2"/>
    <property type="match status" value="1"/>
</dbReference>
<dbReference type="FunFam" id="3.30.1370.10:FF:000001">
    <property type="entry name" value="Polyribonucleotide nucleotidyltransferase"/>
    <property type="match status" value="1"/>
</dbReference>
<dbReference type="FunFam" id="3.30.230.70:FF:000001">
    <property type="entry name" value="Polyribonucleotide nucleotidyltransferase"/>
    <property type="match status" value="1"/>
</dbReference>
<dbReference type="FunFam" id="3.30.230.70:FF:000002">
    <property type="entry name" value="Polyribonucleotide nucleotidyltransferase"/>
    <property type="match status" value="1"/>
</dbReference>
<dbReference type="Gene3D" id="3.30.230.70">
    <property type="entry name" value="GHMP Kinase, N-terminal domain"/>
    <property type="match status" value="2"/>
</dbReference>
<dbReference type="Gene3D" id="3.30.1370.10">
    <property type="entry name" value="K Homology domain, type 1"/>
    <property type="match status" value="1"/>
</dbReference>
<dbReference type="Gene3D" id="2.40.50.140">
    <property type="entry name" value="Nucleic acid-binding proteins"/>
    <property type="match status" value="1"/>
</dbReference>
<dbReference type="HAMAP" id="MF_01595">
    <property type="entry name" value="PNPase"/>
    <property type="match status" value="1"/>
</dbReference>
<dbReference type="InterPro" id="IPR001247">
    <property type="entry name" value="ExoRNase_PH_dom1"/>
</dbReference>
<dbReference type="InterPro" id="IPR015847">
    <property type="entry name" value="ExoRNase_PH_dom2"/>
</dbReference>
<dbReference type="InterPro" id="IPR036345">
    <property type="entry name" value="ExoRNase_PH_dom2_sf"/>
</dbReference>
<dbReference type="InterPro" id="IPR004087">
    <property type="entry name" value="KH_dom"/>
</dbReference>
<dbReference type="InterPro" id="IPR004088">
    <property type="entry name" value="KH_dom_type_1"/>
</dbReference>
<dbReference type="InterPro" id="IPR036612">
    <property type="entry name" value="KH_dom_type_1_sf"/>
</dbReference>
<dbReference type="InterPro" id="IPR012340">
    <property type="entry name" value="NA-bd_OB-fold"/>
</dbReference>
<dbReference type="InterPro" id="IPR012162">
    <property type="entry name" value="PNPase"/>
</dbReference>
<dbReference type="InterPro" id="IPR027408">
    <property type="entry name" value="PNPase/RNase_PH_dom_sf"/>
</dbReference>
<dbReference type="InterPro" id="IPR015848">
    <property type="entry name" value="PNPase_PH_RNA-bd_bac/org-type"/>
</dbReference>
<dbReference type="InterPro" id="IPR036456">
    <property type="entry name" value="PNPase_PH_RNA-bd_sf"/>
</dbReference>
<dbReference type="InterPro" id="IPR020568">
    <property type="entry name" value="Ribosomal_Su5_D2-typ_SF"/>
</dbReference>
<dbReference type="InterPro" id="IPR003029">
    <property type="entry name" value="S1_domain"/>
</dbReference>
<dbReference type="NCBIfam" id="TIGR03591">
    <property type="entry name" value="polynuc_phos"/>
    <property type="match status" value="1"/>
</dbReference>
<dbReference type="NCBIfam" id="NF008805">
    <property type="entry name" value="PRK11824.1"/>
    <property type="match status" value="1"/>
</dbReference>
<dbReference type="PANTHER" id="PTHR11252">
    <property type="entry name" value="POLYRIBONUCLEOTIDE NUCLEOTIDYLTRANSFERASE"/>
    <property type="match status" value="1"/>
</dbReference>
<dbReference type="PANTHER" id="PTHR11252:SF0">
    <property type="entry name" value="POLYRIBONUCLEOTIDE NUCLEOTIDYLTRANSFERASE 1, MITOCHONDRIAL"/>
    <property type="match status" value="1"/>
</dbReference>
<dbReference type="Pfam" id="PF00013">
    <property type="entry name" value="KH_1"/>
    <property type="match status" value="1"/>
</dbReference>
<dbReference type="Pfam" id="PF03726">
    <property type="entry name" value="PNPase"/>
    <property type="match status" value="1"/>
</dbReference>
<dbReference type="Pfam" id="PF01138">
    <property type="entry name" value="RNase_PH"/>
    <property type="match status" value="2"/>
</dbReference>
<dbReference type="Pfam" id="PF03725">
    <property type="entry name" value="RNase_PH_C"/>
    <property type="match status" value="2"/>
</dbReference>
<dbReference type="Pfam" id="PF00575">
    <property type="entry name" value="S1"/>
    <property type="match status" value="1"/>
</dbReference>
<dbReference type="PIRSF" id="PIRSF005499">
    <property type="entry name" value="PNPase"/>
    <property type="match status" value="1"/>
</dbReference>
<dbReference type="SMART" id="SM00322">
    <property type="entry name" value="KH"/>
    <property type="match status" value="1"/>
</dbReference>
<dbReference type="SMART" id="SM00316">
    <property type="entry name" value="S1"/>
    <property type="match status" value="1"/>
</dbReference>
<dbReference type="SUPFAM" id="SSF54791">
    <property type="entry name" value="Eukaryotic type KH-domain (KH-domain type I)"/>
    <property type="match status" value="1"/>
</dbReference>
<dbReference type="SUPFAM" id="SSF50249">
    <property type="entry name" value="Nucleic acid-binding proteins"/>
    <property type="match status" value="1"/>
</dbReference>
<dbReference type="SUPFAM" id="SSF46915">
    <property type="entry name" value="Polynucleotide phosphorylase/guanosine pentaphosphate synthase (PNPase/GPSI), domain 3"/>
    <property type="match status" value="1"/>
</dbReference>
<dbReference type="SUPFAM" id="SSF55666">
    <property type="entry name" value="Ribonuclease PH domain 2-like"/>
    <property type="match status" value="2"/>
</dbReference>
<dbReference type="SUPFAM" id="SSF54211">
    <property type="entry name" value="Ribosomal protein S5 domain 2-like"/>
    <property type="match status" value="2"/>
</dbReference>
<dbReference type="PROSITE" id="PS50084">
    <property type="entry name" value="KH_TYPE_1"/>
    <property type="match status" value="1"/>
</dbReference>
<dbReference type="PROSITE" id="PS50126">
    <property type="entry name" value="S1"/>
    <property type="match status" value="1"/>
</dbReference>
<evidence type="ECO:0000255" key="1">
    <source>
        <dbReference type="HAMAP-Rule" id="MF_01595"/>
    </source>
</evidence>
<protein>
    <recommendedName>
        <fullName evidence="1">Polyribonucleotide nucleotidyltransferase</fullName>
        <ecNumber evidence="1">2.7.7.8</ecNumber>
    </recommendedName>
    <alternativeName>
        <fullName evidence="1">Polynucleotide phosphorylase</fullName>
        <shortName evidence="1">PNPase</shortName>
    </alternativeName>
</protein>
<reference key="1">
    <citation type="journal article" date="2002" name="Nat. Genet.">
        <title>Genome sequence of the endocellular obligate symbiont of tsetse flies, Wigglesworthia glossinidia.</title>
        <authorList>
            <person name="Akman L."/>
            <person name="Yamashita A."/>
            <person name="Watanabe H."/>
            <person name="Oshima K."/>
            <person name="Shiba T."/>
            <person name="Hattori M."/>
            <person name="Aksoy S."/>
        </authorList>
    </citation>
    <scope>NUCLEOTIDE SEQUENCE [LARGE SCALE GENOMIC DNA]</scope>
</reference>
<accession>Q8D2Y0</accession>
<keyword id="KW-0963">Cytoplasm</keyword>
<keyword id="KW-0460">Magnesium</keyword>
<keyword id="KW-0479">Metal-binding</keyword>
<keyword id="KW-0548">Nucleotidyltransferase</keyword>
<keyword id="KW-1185">Reference proteome</keyword>
<keyword id="KW-0694">RNA-binding</keyword>
<keyword id="KW-0808">Transferase</keyword>
<comment type="function">
    <text evidence="1">Involved in mRNA degradation. Catalyzes the phosphorolysis of single-stranded polyribonucleotides processively in the 3'- to 5'-direction.</text>
</comment>
<comment type="catalytic activity">
    <reaction evidence="1">
        <text>RNA(n+1) + phosphate = RNA(n) + a ribonucleoside 5'-diphosphate</text>
        <dbReference type="Rhea" id="RHEA:22096"/>
        <dbReference type="Rhea" id="RHEA-COMP:14527"/>
        <dbReference type="Rhea" id="RHEA-COMP:17342"/>
        <dbReference type="ChEBI" id="CHEBI:43474"/>
        <dbReference type="ChEBI" id="CHEBI:57930"/>
        <dbReference type="ChEBI" id="CHEBI:140395"/>
        <dbReference type="EC" id="2.7.7.8"/>
    </reaction>
</comment>
<comment type="cofactor">
    <cofactor evidence="1">
        <name>Mg(2+)</name>
        <dbReference type="ChEBI" id="CHEBI:18420"/>
    </cofactor>
</comment>
<comment type="subunit">
    <text evidence="1">Component of the RNA degradosome, which is a multiprotein complex involved in RNA processing and mRNA degradation.</text>
</comment>
<comment type="subcellular location">
    <subcellularLocation>
        <location evidence="1">Cytoplasm</location>
    </subcellularLocation>
</comment>
<comment type="similarity">
    <text evidence="1">Belongs to the polyribonucleotide nucleotidyltransferase family.</text>
</comment>